<proteinExistence type="inferred from homology"/>
<reference key="1">
    <citation type="submission" date="1998-08" db="EMBL/GenBank/DDBJ databases">
        <authorList>
            <person name="Kang H.L."/>
            <person name="Kang H.S."/>
        </authorList>
    </citation>
    <scope>NUCLEOTIDE SEQUENCE [GENOMIC DNA]</scope>
    <source>
        <strain>ATCC 31821 / ZM4 / CP4</strain>
    </source>
</reference>
<reference key="2">
    <citation type="journal article" date="2005" name="Nat. Biotechnol.">
        <title>The genome sequence of the ethanologenic bacterium Zymomonas mobilis ZM4.</title>
        <authorList>
            <person name="Seo J.-S."/>
            <person name="Chong H."/>
            <person name="Park H.S."/>
            <person name="Yoon K.-O."/>
            <person name="Jung C."/>
            <person name="Kim J.J."/>
            <person name="Hong J.H."/>
            <person name="Kim H."/>
            <person name="Kim J.-H."/>
            <person name="Kil J.-I."/>
            <person name="Park C.J."/>
            <person name="Oh H.-M."/>
            <person name="Lee J.-S."/>
            <person name="Jin S.-J."/>
            <person name="Um H.-W."/>
            <person name="Lee H.-J."/>
            <person name="Oh S.-J."/>
            <person name="Kim J.Y."/>
            <person name="Kang H.L."/>
            <person name="Lee S.Y."/>
            <person name="Lee K.J."/>
            <person name="Kang H.S."/>
        </authorList>
    </citation>
    <scope>NUCLEOTIDE SEQUENCE [LARGE SCALE GENOMIC DNA]</scope>
    <source>
        <strain>ATCC 31821 / ZM4 / CP4</strain>
    </source>
</reference>
<name>RPPH_ZYMMO</name>
<dbReference type="EC" id="3.6.1.-" evidence="1"/>
<dbReference type="EMBL" id="AF088897">
    <property type="protein sequence ID" value="AAF18293.1"/>
    <property type="molecule type" value="Genomic_DNA"/>
</dbReference>
<dbReference type="EMBL" id="AE008692">
    <property type="protein sequence ID" value="AAV90186.1"/>
    <property type="molecule type" value="Genomic_DNA"/>
</dbReference>
<dbReference type="RefSeq" id="WP_011241323.1">
    <property type="nucleotide sequence ID" value="NZ_CP035711.1"/>
</dbReference>
<dbReference type="SMR" id="Q9RH11"/>
<dbReference type="STRING" id="264203.ZMO1562"/>
<dbReference type="KEGG" id="zmo:ZMO1562"/>
<dbReference type="eggNOG" id="COG1051">
    <property type="taxonomic scope" value="Bacteria"/>
</dbReference>
<dbReference type="HOGENOM" id="CLU_087195_3_0_5"/>
<dbReference type="Proteomes" id="UP000001173">
    <property type="component" value="Chromosome"/>
</dbReference>
<dbReference type="GO" id="GO:0034432">
    <property type="term" value="F:bis(5'-adenosyl)-pentaphosphatase activity"/>
    <property type="evidence" value="ECO:0007669"/>
    <property type="project" value="TreeGrafter"/>
</dbReference>
<dbReference type="GO" id="GO:0008893">
    <property type="term" value="F:guanosine-3',5'-bis(diphosphate) 3'-diphosphatase activity"/>
    <property type="evidence" value="ECO:0007669"/>
    <property type="project" value="TreeGrafter"/>
</dbReference>
<dbReference type="GO" id="GO:0006753">
    <property type="term" value="P:nucleoside phosphate metabolic process"/>
    <property type="evidence" value="ECO:0007669"/>
    <property type="project" value="TreeGrafter"/>
</dbReference>
<dbReference type="GO" id="GO:0019693">
    <property type="term" value="P:ribose phosphate metabolic process"/>
    <property type="evidence" value="ECO:0007669"/>
    <property type="project" value="TreeGrafter"/>
</dbReference>
<dbReference type="CDD" id="cd03671">
    <property type="entry name" value="NUDIX_Ap4A_hydrolase_plant_like"/>
    <property type="match status" value="1"/>
</dbReference>
<dbReference type="Gene3D" id="3.90.79.10">
    <property type="entry name" value="Nucleoside Triphosphate Pyrophosphohydrolase"/>
    <property type="match status" value="1"/>
</dbReference>
<dbReference type="HAMAP" id="MF_00298">
    <property type="entry name" value="Nudix_RppH"/>
    <property type="match status" value="1"/>
</dbReference>
<dbReference type="InterPro" id="IPR020476">
    <property type="entry name" value="Nudix_hydrolase"/>
</dbReference>
<dbReference type="InterPro" id="IPR015797">
    <property type="entry name" value="NUDIX_hydrolase-like_dom_sf"/>
</dbReference>
<dbReference type="InterPro" id="IPR020084">
    <property type="entry name" value="NUDIX_hydrolase_CS"/>
</dbReference>
<dbReference type="InterPro" id="IPR000086">
    <property type="entry name" value="NUDIX_hydrolase_dom"/>
</dbReference>
<dbReference type="InterPro" id="IPR022927">
    <property type="entry name" value="RppH"/>
</dbReference>
<dbReference type="NCBIfam" id="NF001936">
    <property type="entry name" value="PRK00714.1-3"/>
    <property type="match status" value="1"/>
</dbReference>
<dbReference type="NCBIfam" id="NF001938">
    <property type="entry name" value="PRK00714.1-5"/>
    <property type="match status" value="1"/>
</dbReference>
<dbReference type="PANTHER" id="PTHR11839:SF22">
    <property type="entry name" value="NUDIX HYDROLASE 26, CHLOROPLASTIC"/>
    <property type="match status" value="1"/>
</dbReference>
<dbReference type="PANTHER" id="PTHR11839">
    <property type="entry name" value="UDP/ADP-SUGAR PYROPHOSPHATASE"/>
    <property type="match status" value="1"/>
</dbReference>
<dbReference type="Pfam" id="PF00293">
    <property type="entry name" value="NUDIX"/>
    <property type="match status" value="1"/>
</dbReference>
<dbReference type="PRINTS" id="PR00502">
    <property type="entry name" value="NUDIXFAMILY"/>
</dbReference>
<dbReference type="SUPFAM" id="SSF55811">
    <property type="entry name" value="Nudix"/>
    <property type="match status" value="1"/>
</dbReference>
<dbReference type="PROSITE" id="PS51462">
    <property type="entry name" value="NUDIX"/>
    <property type="match status" value="1"/>
</dbReference>
<dbReference type="PROSITE" id="PS00893">
    <property type="entry name" value="NUDIX_BOX"/>
    <property type="match status" value="1"/>
</dbReference>
<evidence type="ECO:0000255" key="1">
    <source>
        <dbReference type="HAMAP-Rule" id="MF_00298"/>
    </source>
</evidence>
<feature type="chain" id="PRO_0000057040" description="RNA pyrophosphohydrolase">
    <location>
        <begin position="1"/>
        <end position="155"/>
    </location>
</feature>
<feature type="domain" description="Nudix hydrolase" evidence="1">
    <location>
        <begin position="5"/>
        <end position="149"/>
    </location>
</feature>
<feature type="short sequence motif" description="Nudix box">
    <location>
        <begin position="39"/>
        <end position="60"/>
    </location>
</feature>
<sequence>MDNLEYRSGVGIMLLNKDNLVFAACRNDMKEEAWQMPQGGLEAKETPEVGVLRELEEETGIPPRMVAIISHTKEWLTYDFPADLQASFFKNKYRGQRQLWFLARYLGRDEDININTDKPEFRAWKWVEPKQLPDLIVAFKKPLYEKILSEFSASL</sequence>
<accession>Q9RH11</accession>
<accession>Q5NM74</accession>
<protein>
    <recommendedName>
        <fullName evidence="1">RNA pyrophosphohydrolase</fullName>
        <ecNumber evidence="1">3.6.1.-</ecNumber>
    </recommendedName>
    <alternativeName>
        <fullName evidence="1">(Di)nucleoside polyphosphate hydrolase</fullName>
    </alternativeName>
</protein>
<gene>
    <name evidence="1" type="primary">rppH</name>
    <name evidence="1" type="synonym">nudH</name>
    <name type="ordered locus">ZMO1562</name>
</gene>
<comment type="function">
    <text evidence="1">Accelerates the degradation of transcripts by removing pyrophosphate from the 5'-end of triphosphorylated RNA, leading to a more labile monophosphorylated state that can stimulate subsequent ribonuclease cleavage.</text>
</comment>
<comment type="cofactor">
    <cofactor evidence="1">
        <name>a divalent metal cation</name>
        <dbReference type="ChEBI" id="CHEBI:60240"/>
    </cofactor>
</comment>
<comment type="similarity">
    <text evidence="1">Belongs to the Nudix hydrolase family. RppH subfamily.</text>
</comment>
<organism>
    <name type="scientific">Zymomonas mobilis subsp. mobilis (strain ATCC 31821 / ZM4 / CP4)</name>
    <dbReference type="NCBI Taxonomy" id="264203"/>
    <lineage>
        <taxon>Bacteria</taxon>
        <taxon>Pseudomonadati</taxon>
        <taxon>Pseudomonadota</taxon>
        <taxon>Alphaproteobacteria</taxon>
        <taxon>Sphingomonadales</taxon>
        <taxon>Zymomonadaceae</taxon>
        <taxon>Zymomonas</taxon>
    </lineage>
</organism>
<keyword id="KW-0378">Hydrolase</keyword>
<keyword id="KW-1185">Reference proteome</keyword>